<organism>
    <name type="scientific">Homo sapiens</name>
    <name type="common">Human</name>
    <dbReference type="NCBI Taxonomy" id="9606"/>
    <lineage>
        <taxon>Eukaryota</taxon>
        <taxon>Metazoa</taxon>
        <taxon>Chordata</taxon>
        <taxon>Craniata</taxon>
        <taxon>Vertebrata</taxon>
        <taxon>Euteleostomi</taxon>
        <taxon>Mammalia</taxon>
        <taxon>Eutheria</taxon>
        <taxon>Euarchontoglires</taxon>
        <taxon>Primates</taxon>
        <taxon>Haplorrhini</taxon>
        <taxon>Catarrhini</taxon>
        <taxon>Hominidae</taxon>
        <taxon>Homo</taxon>
    </lineage>
</organism>
<evidence type="ECO:0000250" key="1">
    <source>
        <dbReference type="UniProtKB" id="Q60973"/>
    </source>
</evidence>
<evidence type="ECO:0000269" key="2">
    <source>
    </source>
</evidence>
<evidence type="ECO:0000269" key="3">
    <source>
    </source>
</evidence>
<evidence type="ECO:0000269" key="4">
    <source>
    </source>
</evidence>
<evidence type="ECO:0000269" key="5">
    <source>
    </source>
</evidence>
<evidence type="ECO:0000269" key="6">
    <source>
    </source>
</evidence>
<evidence type="ECO:0000269" key="7">
    <source>
    </source>
</evidence>
<evidence type="ECO:0000269" key="8">
    <source>
    </source>
</evidence>
<evidence type="ECO:0000269" key="9">
    <source>
    </source>
</evidence>
<evidence type="ECO:0000269" key="10">
    <source>
    </source>
</evidence>
<evidence type="ECO:0000269" key="11">
    <source>
    </source>
</evidence>
<evidence type="ECO:0000269" key="12">
    <source>
    </source>
</evidence>
<evidence type="ECO:0000269" key="13">
    <source>
    </source>
</evidence>
<evidence type="ECO:0000269" key="14">
    <source>
    </source>
</evidence>
<evidence type="ECO:0000269" key="15">
    <source>
    </source>
</evidence>
<evidence type="ECO:0000269" key="16">
    <source>
    </source>
</evidence>
<evidence type="ECO:0000269" key="17">
    <source>
    </source>
</evidence>
<evidence type="ECO:0000269" key="18">
    <source>
    </source>
</evidence>
<evidence type="ECO:0000269" key="19">
    <source>
    </source>
</evidence>
<evidence type="ECO:0000269" key="20">
    <source>
    </source>
</evidence>
<evidence type="ECO:0000269" key="21">
    <source>
    </source>
</evidence>
<evidence type="ECO:0000269" key="22">
    <source>
    </source>
</evidence>
<evidence type="ECO:0000269" key="23">
    <source>
    </source>
</evidence>
<evidence type="ECO:0000269" key="24">
    <source>
    </source>
</evidence>
<evidence type="ECO:0000269" key="25">
    <source>
    </source>
</evidence>
<evidence type="ECO:0000303" key="26">
    <source>
    </source>
</evidence>
<evidence type="ECO:0000305" key="27"/>
<evidence type="ECO:0007744" key="28">
    <source>
    </source>
</evidence>
<evidence type="ECO:0007744" key="29">
    <source>
    </source>
</evidence>
<evidence type="ECO:0007744" key="30">
    <source>
    </source>
</evidence>
<evidence type="ECO:0007744" key="31">
    <source>
    </source>
</evidence>
<evidence type="ECO:0007744" key="32">
    <source>
    </source>
</evidence>
<evidence type="ECO:0007744" key="33">
    <source>
    </source>
</evidence>
<evidence type="ECO:0007744" key="34">
    <source>
    </source>
</evidence>
<evidence type="ECO:0007744" key="35">
    <source>
    </source>
</evidence>
<evidence type="ECO:0007744" key="36">
    <source>
    </source>
</evidence>
<evidence type="ECO:0007744" key="37">
    <source>
    </source>
</evidence>
<evidence type="ECO:0007744" key="38">
    <source>
    </source>
</evidence>
<evidence type="ECO:0007829" key="39">
    <source>
        <dbReference type="PDB" id="3CFV"/>
    </source>
</evidence>
<evidence type="ECO:0007829" key="40">
    <source>
        <dbReference type="PDB" id="7M3X"/>
    </source>
</evidence>
<dbReference type="EMBL" id="U35143">
    <property type="protein sequence ID" value="AAC50231.1"/>
    <property type="molecule type" value="mRNA"/>
</dbReference>
<dbReference type="EMBL" id="X72841">
    <property type="protein sequence ID" value="CAA51360.1"/>
    <property type="molecule type" value="mRNA"/>
</dbReference>
<dbReference type="EMBL" id="AK091911">
    <property type="protein sequence ID" value="BAG52439.1"/>
    <property type="molecule type" value="mRNA"/>
</dbReference>
<dbReference type="EMBL" id="AL929302">
    <property type="status" value="NOT_ANNOTATED_CDS"/>
    <property type="molecule type" value="Genomic_DNA"/>
</dbReference>
<dbReference type="CCDS" id="CCDS14179.1">
    <molecule id="Q16576-1"/>
</dbReference>
<dbReference type="CCDS" id="CCDS56598.1">
    <molecule id="Q16576-2"/>
</dbReference>
<dbReference type="PIR" id="I39181">
    <property type="entry name" value="I39181"/>
</dbReference>
<dbReference type="RefSeq" id="NP_001185648.1">
    <molecule id="Q16576-2"/>
    <property type="nucleotide sequence ID" value="NM_001198719.2"/>
</dbReference>
<dbReference type="RefSeq" id="NP_002884.1">
    <molecule id="Q16576-1"/>
    <property type="nucleotide sequence ID" value="NM_002893.4"/>
</dbReference>
<dbReference type="PDB" id="3CFS">
    <property type="method" value="X-ray"/>
    <property type="resolution" value="2.40 A"/>
    <property type="chains" value="B=1-411"/>
</dbReference>
<dbReference type="PDB" id="3CFV">
    <property type="method" value="X-ray"/>
    <property type="resolution" value="2.60 A"/>
    <property type="chains" value="A/B=1-411"/>
</dbReference>
<dbReference type="PDB" id="7M3X">
    <property type="method" value="X-ray"/>
    <property type="resolution" value="1.46 A"/>
    <property type="chains" value="A=6-411"/>
</dbReference>
<dbReference type="PDBsum" id="3CFS"/>
<dbReference type="PDBsum" id="3CFV"/>
<dbReference type="PDBsum" id="7M3X"/>
<dbReference type="SMR" id="Q16576"/>
<dbReference type="BioGRID" id="111866">
    <property type="interactions" value="512"/>
</dbReference>
<dbReference type="ComplexPortal" id="CPX-2205">
    <property type="entry name" value="Polycomb repressive complex 2.1, EZH1-RBBP7-PCL1-EPOP variant"/>
</dbReference>
<dbReference type="ComplexPortal" id="CPX-2212">
    <property type="entry name" value="Polycomb repressive complex 2.2, EZH1-RBBP7 variant"/>
</dbReference>
<dbReference type="ComplexPortal" id="CPX-2213">
    <property type="entry name" value="Polycomb repressive complex 2.2, EZH2-RBBP7 variant"/>
</dbReference>
<dbReference type="ComplexPortal" id="CPX-2307">
    <property type="entry name" value="Polycomb repressive complex 2.1, EZH1-RBBP7-PCL1-PALI1 variant"/>
</dbReference>
<dbReference type="ComplexPortal" id="CPX-2309">
    <property type="entry name" value="Polycomb repressive complex 2.1, EZH1-RBBP7-PCL2-PALI1 variant"/>
</dbReference>
<dbReference type="ComplexPortal" id="CPX-2311">
    <property type="entry name" value="Polycomb repressive complex 2.1, EZH2-RBBP7-PCL1-PALI1 variant"/>
</dbReference>
<dbReference type="ComplexPortal" id="CPX-2314">
    <property type="entry name" value="Polycomb repressive complex 2.1,EZH2-RBBP7-PCL2-PALI1 variant"/>
</dbReference>
<dbReference type="ComplexPortal" id="CPX-2316">
    <property type="entry name" value="Polycomb repressive complex 2.1,EZH2-RBBP7-PCL3-PALI1 variant"/>
</dbReference>
<dbReference type="ComplexPortal" id="CPX-2320">
    <property type="entry name" value="Polycomb repressive complex 2.1, EZH1-RBBP7-PCL2-EPOP variant"/>
</dbReference>
<dbReference type="ComplexPortal" id="CPX-2323">
    <property type="entry name" value="Polycomb repressive complex 2.1, EZH1-RBBP7-PCL3-EPOP variant"/>
</dbReference>
<dbReference type="ComplexPortal" id="CPX-2325">
    <property type="entry name" value="Polycomb repressive complex 2.1, EZH2-RBBP7-PCL1-EPOP variant"/>
</dbReference>
<dbReference type="ComplexPortal" id="CPX-2327">
    <property type="entry name" value="Polycomb repressive complex 2.1, EZH2-RBBP7-PCL2-EPOP variant"/>
</dbReference>
<dbReference type="ComplexPortal" id="CPX-2329">
    <property type="entry name" value="Polycomb repressive complex 2.1, EZH2-RBBP7-PCL3-EPOP variant"/>
</dbReference>
<dbReference type="ComplexPortal" id="CPX-2570">
    <property type="entry name" value="Polycomb repressive complex 2.1, EZH1-RBBP7-PCL3-PALI1 variant"/>
</dbReference>
<dbReference type="ComplexPortal" id="CPX-3321">
    <property type="entry name" value="SIN3A histone deacetylase complex"/>
</dbReference>
<dbReference type="ComplexPortal" id="CPX-3322">
    <property type="entry name" value="SIN3B histone deacetylase complex"/>
</dbReference>
<dbReference type="ComplexPortal" id="CPX-3323">
    <property type="entry name" value="SIN3A histone deacetylase complex, ES cell-specific variant"/>
</dbReference>
<dbReference type="ComplexPortal" id="CPX-688">
    <property type="entry name" value="NuRF chromatin remodeling complex"/>
</dbReference>
<dbReference type="ComplexPortal" id="CPX-880">
    <property type="entry name" value="MBD2/NuRD nucleosome remodeling and deacetylase complex"/>
</dbReference>
<dbReference type="ComplexPortal" id="CPX-922">
    <property type="entry name" value="MBD3/NuRD nucleosome remodeling and deacetylase complex"/>
</dbReference>
<dbReference type="CORUM" id="Q16576"/>
<dbReference type="DIP" id="DIP-436N"/>
<dbReference type="FunCoup" id="Q16576">
    <property type="interactions" value="2919"/>
</dbReference>
<dbReference type="IntAct" id="Q16576">
    <property type="interactions" value="166"/>
</dbReference>
<dbReference type="MINT" id="Q16576"/>
<dbReference type="STRING" id="9606.ENSP00000369424"/>
<dbReference type="ChEMBL" id="CHEMBL3301388"/>
<dbReference type="ChEMBL" id="CHEMBL5465253"/>
<dbReference type="GlyGen" id="Q16576">
    <property type="glycosylation" value="1 site, 1 O-linked glycan (1 site)"/>
</dbReference>
<dbReference type="iPTMnet" id="Q16576"/>
<dbReference type="MetOSite" id="Q16576"/>
<dbReference type="PhosphoSitePlus" id="Q16576"/>
<dbReference type="SwissPalm" id="Q16576"/>
<dbReference type="BioMuta" id="RBBP7"/>
<dbReference type="DMDM" id="2494891"/>
<dbReference type="jPOST" id="Q16576"/>
<dbReference type="MassIVE" id="Q16576"/>
<dbReference type="PaxDb" id="9606-ENSP00000369424"/>
<dbReference type="PeptideAtlas" id="Q16576"/>
<dbReference type="ProteomicsDB" id="60926">
    <molecule id="Q16576-1"/>
</dbReference>
<dbReference type="ProteomicsDB" id="60927">
    <molecule id="Q16576-2"/>
</dbReference>
<dbReference type="Pumba" id="Q16576"/>
<dbReference type="Antibodypedia" id="24054">
    <property type="antibodies" value="395 antibodies from 31 providers"/>
</dbReference>
<dbReference type="DNASU" id="5931"/>
<dbReference type="Ensembl" id="ENST00000380084.8">
    <molecule id="Q16576-2"/>
    <property type="protein sequence ID" value="ENSP00000369424.4"/>
    <property type="gene ID" value="ENSG00000102054.18"/>
</dbReference>
<dbReference type="Ensembl" id="ENST00000380087.7">
    <molecule id="Q16576-1"/>
    <property type="protein sequence ID" value="ENSP00000369427.3"/>
    <property type="gene ID" value="ENSG00000102054.18"/>
</dbReference>
<dbReference type="GeneID" id="5931"/>
<dbReference type="KEGG" id="hsa:5931"/>
<dbReference type="MANE-Select" id="ENST00000380087.7">
    <property type="protein sequence ID" value="ENSP00000369427.3"/>
    <property type="RefSeq nucleotide sequence ID" value="NM_002893.4"/>
    <property type="RefSeq protein sequence ID" value="NP_002884.1"/>
</dbReference>
<dbReference type="UCSC" id="uc004cxs.3">
    <molecule id="Q16576-1"/>
    <property type="organism name" value="human"/>
</dbReference>
<dbReference type="AGR" id="HGNC:9890"/>
<dbReference type="CTD" id="5931"/>
<dbReference type="DisGeNET" id="5931"/>
<dbReference type="GeneCards" id="RBBP7"/>
<dbReference type="HGNC" id="HGNC:9890">
    <property type="gene designation" value="RBBP7"/>
</dbReference>
<dbReference type="HPA" id="ENSG00000102054">
    <property type="expression patterns" value="Low tissue specificity"/>
</dbReference>
<dbReference type="MIM" id="300825">
    <property type="type" value="gene"/>
</dbReference>
<dbReference type="MIM" id="301137">
    <property type="type" value="phenotype"/>
</dbReference>
<dbReference type="neXtProt" id="NX_Q16576"/>
<dbReference type="OpenTargets" id="ENSG00000102054"/>
<dbReference type="PharmGKB" id="PA34254"/>
<dbReference type="VEuPathDB" id="HostDB:ENSG00000102054"/>
<dbReference type="eggNOG" id="KOG0264">
    <property type="taxonomic scope" value="Eukaryota"/>
</dbReference>
<dbReference type="GeneTree" id="ENSGT00940000154748"/>
<dbReference type="InParanoid" id="Q16576"/>
<dbReference type="OMA" id="KIRAMPA"/>
<dbReference type="OrthoDB" id="427795at2759"/>
<dbReference type="PAN-GO" id="Q16576">
    <property type="GO annotations" value="7 GO annotations based on evolutionary models"/>
</dbReference>
<dbReference type="PhylomeDB" id="Q16576"/>
<dbReference type="TreeFam" id="TF106485"/>
<dbReference type="PathwayCommons" id="Q16576"/>
<dbReference type="Reactome" id="R-HSA-212300">
    <property type="pathway name" value="PRC2 methylates histones and DNA"/>
</dbReference>
<dbReference type="Reactome" id="R-HSA-2559580">
    <property type="pathway name" value="Oxidative Stress Induced Senescence"/>
</dbReference>
<dbReference type="Reactome" id="R-HSA-3214815">
    <property type="pathway name" value="HDACs deacetylate histones"/>
</dbReference>
<dbReference type="Reactome" id="R-HSA-3214841">
    <property type="pathway name" value="PKMTs methylate histone lysines"/>
</dbReference>
<dbReference type="Reactome" id="R-HSA-3214847">
    <property type="pathway name" value="HATs acetylate histones"/>
</dbReference>
<dbReference type="Reactome" id="R-HSA-3214858">
    <property type="pathway name" value="RMTs methylate histone arginines"/>
</dbReference>
<dbReference type="Reactome" id="R-HSA-427389">
    <property type="pathway name" value="ERCC6 (CSB) and EHMT2 (G9a) positively regulate rRNA expression"/>
</dbReference>
<dbReference type="Reactome" id="R-HSA-5617472">
    <property type="pathway name" value="Activation of anterior HOX genes in hindbrain development during early embryogenesis"/>
</dbReference>
<dbReference type="Reactome" id="R-HSA-606279">
    <property type="pathway name" value="Deposition of new CENPA-containing nucleosomes at the centromere"/>
</dbReference>
<dbReference type="Reactome" id="R-HSA-6804758">
    <property type="pathway name" value="Regulation of TP53 Activity through Acetylation"/>
</dbReference>
<dbReference type="Reactome" id="R-HSA-73762">
    <property type="pathway name" value="RNA Polymerase I Transcription Initiation"/>
</dbReference>
<dbReference type="Reactome" id="R-HSA-8943724">
    <property type="pathway name" value="Regulation of PTEN gene transcription"/>
</dbReference>
<dbReference type="Reactome" id="R-HSA-8951664">
    <property type="pathway name" value="Neddylation"/>
</dbReference>
<dbReference type="Reactome" id="R-HSA-8953750">
    <property type="pathway name" value="Transcriptional Regulation by E2F6"/>
</dbReference>
<dbReference type="Reactome" id="R-HSA-9609690">
    <property type="pathway name" value="HCMV Early Events"/>
</dbReference>
<dbReference type="Reactome" id="R-HSA-9679191">
    <property type="pathway name" value="Potential therapeutics for SARS"/>
</dbReference>
<dbReference type="Reactome" id="R-HSA-9710421">
    <property type="pathway name" value="Defective pyroptosis"/>
</dbReference>
<dbReference type="Reactome" id="R-HSA-9843940">
    <property type="pathway name" value="Regulation of endogenous retroelements by KRAB-ZFP proteins"/>
</dbReference>
<dbReference type="Reactome" id="R-HSA-9844594">
    <property type="pathway name" value="Transcriptional regulation of brown and beige adipocyte differentiation by EBF2"/>
</dbReference>
<dbReference type="Reactome" id="R-HSA-9845323">
    <property type="pathway name" value="Regulation of endogenous retroelements by Piwi-interacting RNAs (piRNAs)"/>
</dbReference>
<dbReference type="SignaLink" id="Q16576"/>
<dbReference type="SIGNOR" id="Q16576"/>
<dbReference type="BioGRID-ORCS" id="5931">
    <property type="hits" value="42 hits in 784 CRISPR screens"/>
</dbReference>
<dbReference type="CD-CODE" id="91857CE7">
    <property type="entry name" value="Nucleolus"/>
</dbReference>
<dbReference type="ChiTaRS" id="RBBP7">
    <property type="organism name" value="human"/>
</dbReference>
<dbReference type="EvolutionaryTrace" id="Q16576"/>
<dbReference type="GeneWiki" id="RBBP7"/>
<dbReference type="GenomeRNAi" id="5931"/>
<dbReference type="Pharos" id="Q16576">
    <property type="development level" value="Tbio"/>
</dbReference>
<dbReference type="PRO" id="PR:Q16576"/>
<dbReference type="Proteomes" id="UP000005640">
    <property type="component" value="Chromosome X"/>
</dbReference>
<dbReference type="RNAct" id="Q16576">
    <property type="molecule type" value="protein"/>
</dbReference>
<dbReference type="Bgee" id="ENSG00000102054">
    <property type="expression patterns" value="Expressed in oocyte and 205 other cell types or tissues"/>
</dbReference>
<dbReference type="ExpressionAtlas" id="Q16576">
    <property type="expression patterns" value="baseline and differential"/>
</dbReference>
<dbReference type="GO" id="GO:1904949">
    <property type="term" value="C:ATPase complex"/>
    <property type="evidence" value="ECO:0000314"/>
    <property type="project" value="ComplexPortal"/>
</dbReference>
<dbReference type="GO" id="GO:0000781">
    <property type="term" value="C:chromosome, telomeric region"/>
    <property type="evidence" value="ECO:0000314"/>
    <property type="project" value="UniProtKB"/>
</dbReference>
<dbReference type="GO" id="GO:0005829">
    <property type="term" value="C:cytosol"/>
    <property type="evidence" value="ECO:0000314"/>
    <property type="project" value="HPA"/>
</dbReference>
<dbReference type="GO" id="GO:0035098">
    <property type="term" value="C:ESC/E(Z) complex"/>
    <property type="evidence" value="ECO:0000314"/>
    <property type="project" value="UniProtKB"/>
</dbReference>
<dbReference type="GO" id="GO:0000118">
    <property type="term" value="C:histone deacetylase complex"/>
    <property type="evidence" value="ECO:0000314"/>
    <property type="project" value="UniProtKB"/>
</dbReference>
<dbReference type="GO" id="GO:0005654">
    <property type="term" value="C:nucleoplasm"/>
    <property type="evidence" value="ECO:0000314"/>
    <property type="project" value="HPA"/>
</dbReference>
<dbReference type="GO" id="GO:0005634">
    <property type="term" value="C:nucleus"/>
    <property type="evidence" value="ECO:0000314"/>
    <property type="project" value="UniProtKB"/>
</dbReference>
<dbReference type="GO" id="GO:0016581">
    <property type="term" value="C:NuRD complex"/>
    <property type="evidence" value="ECO:0000314"/>
    <property type="project" value="UniProtKB"/>
</dbReference>
<dbReference type="GO" id="GO:0016589">
    <property type="term" value="C:NURF complex"/>
    <property type="evidence" value="ECO:0000353"/>
    <property type="project" value="ComplexPortal"/>
</dbReference>
<dbReference type="GO" id="GO:0070822">
    <property type="term" value="C:Sin3-type complex"/>
    <property type="evidence" value="ECO:0000303"/>
    <property type="project" value="ComplexPortal"/>
</dbReference>
<dbReference type="GO" id="GO:0042393">
    <property type="term" value="F:histone binding"/>
    <property type="evidence" value="ECO:0000314"/>
    <property type="project" value="UniProtKB"/>
</dbReference>
<dbReference type="GO" id="GO:0003723">
    <property type="term" value="F:RNA binding"/>
    <property type="evidence" value="ECO:0007669"/>
    <property type="project" value="Ensembl"/>
</dbReference>
<dbReference type="GO" id="GO:0007420">
    <property type="term" value="P:brain development"/>
    <property type="evidence" value="ECO:0000303"/>
    <property type="project" value="ComplexPortal"/>
</dbReference>
<dbReference type="GO" id="GO:0070370">
    <property type="term" value="P:cellular heat acclimation"/>
    <property type="evidence" value="ECO:0000314"/>
    <property type="project" value="UniProtKB"/>
</dbReference>
<dbReference type="GO" id="GO:0006338">
    <property type="term" value="P:chromatin remodeling"/>
    <property type="evidence" value="ECO:0000314"/>
    <property type="project" value="ComplexPortal"/>
</dbReference>
<dbReference type="GO" id="GO:0006260">
    <property type="term" value="P:DNA replication"/>
    <property type="evidence" value="ECO:0007669"/>
    <property type="project" value="UniProtKB-KW"/>
</dbReference>
<dbReference type="GO" id="GO:0030308">
    <property type="term" value="P:negative regulation of cell growth"/>
    <property type="evidence" value="ECO:0000314"/>
    <property type="project" value="UniProtKB"/>
</dbReference>
<dbReference type="GO" id="GO:0030336">
    <property type="term" value="P:negative regulation of cell migration"/>
    <property type="evidence" value="ECO:0000303"/>
    <property type="project" value="ComplexPortal"/>
</dbReference>
<dbReference type="GO" id="GO:0045892">
    <property type="term" value="P:negative regulation of DNA-templated transcription"/>
    <property type="evidence" value="ECO:0000303"/>
    <property type="project" value="ComplexPortal"/>
</dbReference>
<dbReference type="GO" id="GO:1902455">
    <property type="term" value="P:negative regulation of stem cell population maintenance"/>
    <property type="evidence" value="ECO:0000303"/>
    <property type="project" value="ComplexPortal"/>
</dbReference>
<dbReference type="GO" id="GO:0000122">
    <property type="term" value="P:negative regulation of transcription by RNA polymerase II"/>
    <property type="evidence" value="ECO:0000303"/>
    <property type="project" value="ComplexPortal"/>
</dbReference>
<dbReference type="GO" id="GO:0030512">
    <property type="term" value="P:negative regulation of transforming growth factor beta receptor signaling pathway"/>
    <property type="evidence" value="ECO:0000303"/>
    <property type="project" value="ComplexPortal"/>
</dbReference>
<dbReference type="GO" id="GO:0045893">
    <property type="term" value="P:positive regulation of DNA-templated transcription"/>
    <property type="evidence" value="ECO:0000303"/>
    <property type="project" value="ComplexPortal"/>
</dbReference>
<dbReference type="GO" id="GO:1902459">
    <property type="term" value="P:positive regulation of stem cell population maintenance"/>
    <property type="evidence" value="ECO:0000303"/>
    <property type="project" value="ComplexPortal"/>
</dbReference>
<dbReference type="GO" id="GO:0042659">
    <property type="term" value="P:regulation of cell fate specification"/>
    <property type="evidence" value="ECO:0000303"/>
    <property type="project" value="ComplexPortal"/>
</dbReference>
<dbReference type="GO" id="GO:0006355">
    <property type="term" value="P:regulation of DNA-templated transcription"/>
    <property type="evidence" value="ECO:0000314"/>
    <property type="project" value="ComplexPortal"/>
</dbReference>
<dbReference type="GO" id="GO:2000736">
    <property type="term" value="P:regulation of stem cell differentiation"/>
    <property type="evidence" value="ECO:0000303"/>
    <property type="project" value="ComplexPortal"/>
</dbReference>
<dbReference type="GO" id="GO:0048545">
    <property type="term" value="P:response to steroid hormone"/>
    <property type="evidence" value="ECO:0007669"/>
    <property type="project" value="Ensembl"/>
</dbReference>
<dbReference type="DisProt" id="DP01282"/>
<dbReference type="FunFam" id="2.130.10.10:FF:000021">
    <property type="entry name" value="histone-binding protein RBBP4 isoform X1"/>
    <property type="match status" value="1"/>
</dbReference>
<dbReference type="Gene3D" id="2.130.10.10">
    <property type="entry name" value="YVTN repeat-like/Quinoprotein amine dehydrogenase"/>
    <property type="match status" value="1"/>
</dbReference>
<dbReference type="IDEAL" id="IID00084"/>
<dbReference type="InterPro" id="IPR020472">
    <property type="entry name" value="G-protein_beta_WD-40_rep"/>
</dbReference>
<dbReference type="InterPro" id="IPR022052">
    <property type="entry name" value="Histone-bd_RBBP4-like_N"/>
</dbReference>
<dbReference type="InterPro" id="IPR015943">
    <property type="entry name" value="WD40/YVTN_repeat-like_dom_sf"/>
</dbReference>
<dbReference type="InterPro" id="IPR019775">
    <property type="entry name" value="WD40_repeat_CS"/>
</dbReference>
<dbReference type="InterPro" id="IPR036322">
    <property type="entry name" value="WD40_repeat_dom_sf"/>
</dbReference>
<dbReference type="InterPro" id="IPR001680">
    <property type="entry name" value="WD40_rpt"/>
</dbReference>
<dbReference type="InterPro" id="IPR050459">
    <property type="entry name" value="WD_repeat_RBAP46/RBAP48/MSI1"/>
</dbReference>
<dbReference type="PANTHER" id="PTHR22850">
    <property type="entry name" value="WD40 REPEAT FAMILY"/>
    <property type="match status" value="1"/>
</dbReference>
<dbReference type="Pfam" id="PF12265">
    <property type="entry name" value="CAF1C_H4-bd"/>
    <property type="match status" value="1"/>
</dbReference>
<dbReference type="Pfam" id="PF00400">
    <property type="entry name" value="WD40"/>
    <property type="match status" value="5"/>
</dbReference>
<dbReference type="PRINTS" id="PR00320">
    <property type="entry name" value="GPROTEINBRPT"/>
</dbReference>
<dbReference type="SMART" id="SM00320">
    <property type="entry name" value="WD40"/>
    <property type="match status" value="6"/>
</dbReference>
<dbReference type="SUPFAM" id="SSF50978">
    <property type="entry name" value="WD40 repeat-like"/>
    <property type="match status" value="1"/>
</dbReference>
<dbReference type="PROSITE" id="PS00678">
    <property type="entry name" value="WD_REPEATS_1"/>
    <property type="match status" value="3"/>
</dbReference>
<dbReference type="PROSITE" id="PS50082">
    <property type="entry name" value="WD_REPEATS_2"/>
    <property type="match status" value="5"/>
</dbReference>
<dbReference type="PROSITE" id="PS50294">
    <property type="entry name" value="WD_REPEATS_REGION"/>
    <property type="match status" value="1"/>
</dbReference>
<proteinExistence type="evidence at protein level"/>
<gene>
    <name type="primary">RBBP7</name>
    <name type="synonym">RBAP46</name>
</gene>
<reference key="1">
    <citation type="journal article" date="1995" name="J. Biol. Chem.">
        <title>Dual retinoblastoma-binding proteins with properties related to a negative regulator of ras in yeast.</title>
        <authorList>
            <person name="Qian Y.-W."/>
            <person name="Lee E.Y.-H.P."/>
        </authorList>
    </citation>
    <scope>NUCLEOTIDE SEQUENCE [MRNA] (ISOFORM 1)</scope>
    <scope>INTERACTION WITH RB1</scope>
</reference>
<reference key="2">
    <citation type="submission" date="1993-05" db="EMBL/GenBank/DDBJ databases">
        <authorList>
            <person name="Nielsen M.S."/>
            <person name="Rasmussen H.H."/>
            <person name="Dejgaard K."/>
            <person name="Celis J.E."/>
            <person name="Leffers H."/>
        </authorList>
    </citation>
    <scope>NUCLEOTIDE SEQUENCE [MRNA] (ISOFORM 1)</scope>
</reference>
<reference key="3">
    <citation type="journal article" date="2004" name="Nat. Genet.">
        <title>Complete sequencing and characterization of 21,243 full-length human cDNAs.</title>
        <authorList>
            <person name="Ota T."/>
            <person name="Suzuki Y."/>
            <person name="Nishikawa T."/>
            <person name="Otsuki T."/>
            <person name="Sugiyama T."/>
            <person name="Irie R."/>
            <person name="Wakamatsu A."/>
            <person name="Hayashi K."/>
            <person name="Sato H."/>
            <person name="Nagai K."/>
            <person name="Kimura K."/>
            <person name="Makita H."/>
            <person name="Sekine M."/>
            <person name="Obayashi M."/>
            <person name="Nishi T."/>
            <person name="Shibahara T."/>
            <person name="Tanaka T."/>
            <person name="Ishii S."/>
            <person name="Yamamoto J."/>
            <person name="Saito K."/>
            <person name="Kawai Y."/>
            <person name="Isono Y."/>
            <person name="Nakamura Y."/>
            <person name="Nagahari K."/>
            <person name="Murakami K."/>
            <person name="Yasuda T."/>
            <person name="Iwayanagi T."/>
            <person name="Wagatsuma M."/>
            <person name="Shiratori A."/>
            <person name="Sudo H."/>
            <person name="Hosoiri T."/>
            <person name="Kaku Y."/>
            <person name="Kodaira H."/>
            <person name="Kondo H."/>
            <person name="Sugawara M."/>
            <person name="Takahashi M."/>
            <person name="Kanda K."/>
            <person name="Yokoi T."/>
            <person name="Furuya T."/>
            <person name="Kikkawa E."/>
            <person name="Omura Y."/>
            <person name="Abe K."/>
            <person name="Kamihara K."/>
            <person name="Katsuta N."/>
            <person name="Sato K."/>
            <person name="Tanikawa M."/>
            <person name="Yamazaki M."/>
            <person name="Ninomiya K."/>
            <person name="Ishibashi T."/>
            <person name="Yamashita H."/>
            <person name="Murakawa K."/>
            <person name="Fujimori K."/>
            <person name="Tanai H."/>
            <person name="Kimata M."/>
            <person name="Watanabe M."/>
            <person name="Hiraoka S."/>
            <person name="Chiba Y."/>
            <person name="Ishida S."/>
            <person name="Ono Y."/>
            <person name="Takiguchi S."/>
            <person name="Watanabe S."/>
            <person name="Yosida M."/>
            <person name="Hotuta T."/>
            <person name="Kusano J."/>
            <person name="Kanehori K."/>
            <person name="Takahashi-Fujii A."/>
            <person name="Hara H."/>
            <person name="Tanase T.-O."/>
            <person name="Nomura Y."/>
            <person name="Togiya S."/>
            <person name="Komai F."/>
            <person name="Hara R."/>
            <person name="Takeuchi K."/>
            <person name="Arita M."/>
            <person name="Imose N."/>
            <person name="Musashino K."/>
            <person name="Yuuki H."/>
            <person name="Oshima A."/>
            <person name="Sasaki N."/>
            <person name="Aotsuka S."/>
            <person name="Yoshikawa Y."/>
            <person name="Matsunawa H."/>
            <person name="Ichihara T."/>
            <person name="Shiohata N."/>
            <person name="Sano S."/>
            <person name="Moriya S."/>
            <person name="Momiyama H."/>
            <person name="Satoh N."/>
            <person name="Takami S."/>
            <person name="Terashima Y."/>
            <person name="Suzuki O."/>
            <person name="Nakagawa S."/>
            <person name="Senoh A."/>
            <person name="Mizoguchi H."/>
            <person name="Goto Y."/>
            <person name="Shimizu F."/>
            <person name="Wakebe H."/>
            <person name="Hishigaki H."/>
            <person name="Watanabe T."/>
            <person name="Sugiyama A."/>
            <person name="Takemoto M."/>
            <person name="Kawakami B."/>
            <person name="Yamazaki M."/>
            <person name="Watanabe K."/>
            <person name="Kumagai A."/>
            <person name="Itakura S."/>
            <person name="Fukuzumi Y."/>
            <person name="Fujimori Y."/>
            <person name="Komiyama M."/>
            <person name="Tashiro H."/>
            <person name="Tanigami A."/>
            <person name="Fujiwara T."/>
            <person name="Ono T."/>
            <person name="Yamada K."/>
            <person name="Fujii Y."/>
            <person name="Ozaki K."/>
            <person name="Hirao M."/>
            <person name="Ohmori Y."/>
            <person name="Kawabata A."/>
            <person name="Hikiji T."/>
            <person name="Kobatake N."/>
            <person name="Inagaki H."/>
            <person name="Ikema Y."/>
            <person name="Okamoto S."/>
            <person name="Okitani R."/>
            <person name="Kawakami T."/>
            <person name="Noguchi S."/>
            <person name="Itoh T."/>
            <person name="Shigeta K."/>
            <person name="Senba T."/>
            <person name="Matsumura K."/>
            <person name="Nakajima Y."/>
            <person name="Mizuno T."/>
            <person name="Morinaga M."/>
            <person name="Sasaki M."/>
            <person name="Togashi T."/>
            <person name="Oyama M."/>
            <person name="Hata H."/>
            <person name="Watanabe M."/>
            <person name="Komatsu T."/>
            <person name="Mizushima-Sugano J."/>
            <person name="Satoh T."/>
            <person name="Shirai Y."/>
            <person name="Takahashi Y."/>
            <person name="Nakagawa K."/>
            <person name="Okumura K."/>
            <person name="Nagase T."/>
            <person name="Nomura N."/>
            <person name="Kikuchi H."/>
            <person name="Masuho Y."/>
            <person name="Yamashita R."/>
            <person name="Nakai K."/>
            <person name="Yada T."/>
            <person name="Nakamura Y."/>
            <person name="Ohara O."/>
            <person name="Isogai T."/>
            <person name="Sugano S."/>
        </authorList>
    </citation>
    <scope>NUCLEOTIDE SEQUENCE [LARGE SCALE MRNA] (ISOFORM 2)</scope>
    <source>
        <tissue>Kidney</tissue>
    </source>
</reference>
<reference key="4">
    <citation type="journal article" date="2005" name="Nature">
        <title>The DNA sequence of the human X chromosome.</title>
        <authorList>
            <person name="Ross M.T."/>
            <person name="Grafham D.V."/>
            <person name="Coffey A.J."/>
            <person name="Scherer S."/>
            <person name="McLay K."/>
            <person name="Muzny D."/>
            <person name="Platzer M."/>
            <person name="Howell G.R."/>
            <person name="Burrows C."/>
            <person name="Bird C.P."/>
            <person name="Frankish A."/>
            <person name="Lovell F.L."/>
            <person name="Howe K.L."/>
            <person name="Ashurst J.L."/>
            <person name="Fulton R.S."/>
            <person name="Sudbrak R."/>
            <person name="Wen G."/>
            <person name="Jones M.C."/>
            <person name="Hurles M.E."/>
            <person name="Andrews T.D."/>
            <person name="Scott C.E."/>
            <person name="Searle S."/>
            <person name="Ramser J."/>
            <person name="Whittaker A."/>
            <person name="Deadman R."/>
            <person name="Carter N.P."/>
            <person name="Hunt S.E."/>
            <person name="Chen R."/>
            <person name="Cree A."/>
            <person name="Gunaratne P."/>
            <person name="Havlak P."/>
            <person name="Hodgson A."/>
            <person name="Metzker M.L."/>
            <person name="Richards S."/>
            <person name="Scott G."/>
            <person name="Steffen D."/>
            <person name="Sodergren E."/>
            <person name="Wheeler D.A."/>
            <person name="Worley K.C."/>
            <person name="Ainscough R."/>
            <person name="Ambrose K.D."/>
            <person name="Ansari-Lari M.A."/>
            <person name="Aradhya S."/>
            <person name="Ashwell R.I."/>
            <person name="Babbage A.K."/>
            <person name="Bagguley C.L."/>
            <person name="Ballabio A."/>
            <person name="Banerjee R."/>
            <person name="Barker G.E."/>
            <person name="Barlow K.F."/>
            <person name="Barrett I.P."/>
            <person name="Bates K.N."/>
            <person name="Beare D.M."/>
            <person name="Beasley H."/>
            <person name="Beasley O."/>
            <person name="Beck A."/>
            <person name="Bethel G."/>
            <person name="Blechschmidt K."/>
            <person name="Brady N."/>
            <person name="Bray-Allen S."/>
            <person name="Bridgeman A.M."/>
            <person name="Brown A.J."/>
            <person name="Brown M.J."/>
            <person name="Bonnin D."/>
            <person name="Bruford E.A."/>
            <person name="Buhay C."/>
            <person name="Burch P."/>
            <person name="Burford D."/>
            <person name="Burgess J."/>
            <person name="Burrill W."/>
            <person name="Burton J."/>
            <person name="Bye J.M."/>
            <person name="Carder C."/>
            <person name="Carrel L."/>
            <person name="Chako J."/>
            <person name="Chapman J.C."/>
            <person name="Chavez D."/>
            <person name="Chen E."/>
            <person name="Chen G."/>
            <person name="Chen Y."/>
            <person name="Chen Z."/>
            <person name="Chinault C."/>
            <person name="Ciccodicola A."/>
            <person name="Clark S.Y."/>
            <person name="Clarke G."/>
            <person name="Clee C.M."/>
            <person name="Clegg S."/>
            <person name="Clerc-Blankenburg K."/>
            <person name="Clifford K."/>
            <person name="Cobley V."/>
            <person name="Cole C.G."/>
            <person name="Conquer J.S."/>
            <person name="Corby N."/>
            <person name="Connor R.E."/>
            <person name="David R."/>
            <person name="Davies J."/>
            <person name="Davis C."/>
            <person name="Davis J."/>
            <person name="Delgado O."/>
            <person name="Deshazo D."/>
            <person name="Dhami P."/>
            <person name="Ding Y."/>
            <person name="Dinh H."/>
            <person name="Dodsworth S."/>
            <person name="Draper H."/>
            <person name="Dugan-Rocha S."/>
            <person name="Dunham A."/>
            <person name="Dunn M."/>
            <person name="Durbin K.J."/>
            <person name="Dutta I."/>
            <person name="Eades T."/>
            <person name="Ellwood M."/>
            <person name="Emery-Cohen A."/>
            <person name="Errington H."/>
            <person name="Evans K.L."/>
            <person name="Faulkner L."/>
            <person name="Francis F."/>
            <person name="Frankland J."/>
            <person name="Fraser A.E."/>
            <person name="Galgoczy P."/>
            <person name="Gilbert J."/>
            <person name="Gill R."/>
            <person name="Gloeckner G."/>
            <person name="Gregory S.G."/>
            <person name="Gribble S."/>
            <person name="Griffiths C."/>
            <person name="Grocock R."/>
            <person name="Gu Y."/>
            <person name="Gwilliam R."/>
            <person name="Hamilton C."/>
            <person name="Hart E.A."/>
            <person name="Hawes A."/>
            <person name="Heath P.D."/>
            <person name="Heitmann K."/>
            <person name="Hennig S."/>
            <person name="Hernandez J."/>
            <person name="Hinzmann B."/>
            <person name="Ho S."/>
            <person name="Hoffs M."/>
            <person name="Howden P.J."/>
            <person name="Huckle E.J."/>
            <person name="Hume J."/>
            <person name="Hunt P.J."/>
            <person name="Hunt A.R."/>
            <person name="Isherwood J."/>
            <person name="Jacob L."/>
            <person name="Johnson D."/>
            <person name="Jones S."/>
            <person name="de Jong P.J."/>
            <person name="Joseph S.S."/>
            <person name="Keenan S."/>
            <person name="Kelly S."/>
            <person name="Kershaw J.K."/>
            <person name="Khan Z."/>
            <person name="Kioschis P."/>
            <person name="Klages S."/>
            <person name="Knights A.J."/>
            <person name="Kosiura A."/>
            <person name="Kovar-Smith C."/>
            <person name="Laird G.K."/>
            <person name="Langford C."/>
            <person name="Lawlor S."/>
            <person name="Leversha M."/>
            <person name="Lewis L."/>
            <person name="Liu W."/>
            <person name="Lloyd C."/>
            <person name="Lloyd D.M."/>
            <person name="Loulseged H."/>
            <person name="Loveland J.E."/>
            <person name="Lovell J.D."/>
            <person name="Lozado R."/>
            <person name="Lu J."/>
            <person name="Lyne R."/>
            <person name="Ma J."/>
            <person name="Maheshwari M."/>
            <person name="Matthews L.H."/>
            <person name="McDowall J."/>
            <person name="McLaren S."/>
            <person name="McMurray A."/>
            <person name="Meidl P."/>
            <person name="Meitinger T."/>
            <person name="Milne S."/>
            <person name="Miner G."/>
            <person name="Mistry S.L."/>
            <person name="Morgan M."/>
            <person name="Morris S."/>
            <person name="Mueller I."/>
            <person name="Mullikin J.C."/>
            <person name="Nguyen N."/>
            <person name="Nordsiek G."/>
            <person name="Nyakatura G."/>
            <person name="O'dell C.N."/>
            <person name="Okwuonu G."/>
            <person name="Palmer S."/>
            <person name="Pandian R."/>
            <person name="Parker D."/>
            <person name="Parrish J."/>
            <person name="Pasternak S."/>
            <person name="Patel D."/>
            <person name="Pearce A.V."/>
            <person name="Pearson D.M."/>
            <person name="Pelan S.E."/>
            <person name="Perez L."/>
            <person name="Porter K.M."/>
            <person name="Ramsey Y."/>
            <person name="Reichwald K."/>
            <person name="Rhodes S."/>
            <person name="Ridler K.A."/>
            <person name="Schlessinger D."/>
            <person name="Schueler M.G."/>
            <person name="Sehra H.K."/>
            <person name="Shaw-Smith C."/>
            <person name="Shen H."/>
            <person name="Sheridan E.M."/>
            <person name="Shownkeen R."/>
            <person name="Skuce C.D."/>
            <person name="Smith M.L."/>
            <person name="Sotheran E.C."/>
            <person name="Steingruber H.E."/>
            <person name="Steward C.A."/>
            <person name="Storey R."/>
            <person name="Swann R.M."/>
            <person name="Swarbreck D."/>
            <person name="Tabor P.E."/>
            <person name="Taudien S."/>
            <person name="Taylor T."/>
            <person name="Teague B."/>
            <person name="Thomas K."/>
            <person name="Thorpe A."/>
            <person name="Timms K."/>
            <person name="Tracey A."/>
            <person name="Trevanion S."/>
            <person name="Tromans A.C."/>
            <person name="d'Urso M."/>
            <person name="Verduzco D."/>
            <person name="Villasana D."/>
            <person name="Waldron L."/>
            <person name="Wall M."/>
            <person name="Wang Q."/>
            <person name="Warren J."/>
            <person name="Warry G.L."/>
            <person name="Wei X."/>
            <person name="West A."/>
            <person name="Whitehead S.L."/>
            <person name="Whiteley M.N."/>
            <person name="Wilkinson J.E."/>
            <person name="Willey D.L."/>
            <person name="Williams G."/>
            <person name="Williams L."/>
            <person name="Williamson A."/>
            <person name="Williamson H."/>
            <person name="Wilming L."/>
            <person name="Woodmansey R.L."/>
            <person name="Wray P.W."/>
            <person name="Yen J."/>
            <person name="Zhang J."/>
            <person name="Zhou J."/>
            <person name="Zoghbi H."/>
            <person name="Zorilla S."/>
            <person name="Buck D."/>
            <person name="Reinhardt R."/>
            <person name="Poustka A."/>
            <person name="Rosenthal A."/>
            <person name="Lehrach H."/>
            <person name="Meindl A."/>
            <person name="Minx P.J."/>
            <person name="Hillier L.W."/>
            <person name="Willard H.F."/>
            <person name="Wilson R.K."/>
            <person name="Waterston R.H."/>
            <person name="Rice C.M."/>
            <person name="Vaudin M."/>
            <person name="Coulson A."/>
            <person name="Nelson D.L."/>
            <person name="Weinstock G."/>
            <person name="Sulston J.E."/>
            <person name="Durbin R.M."/>
            <person name="Hubbard T."/>
            <person name="Gibbs R.A."/>
            <person name="Beck S."/>
            <person name="Rogers J."/>
            <person name="Bentley D.R."/>
        </authorList>
    </citation>
    <scope>NUCLEOTIDE SEQUENCE [LARGE SCALE GENOMIC DNA]</scope>
</reference>
<reference key="5">
    <citation type="journal article" date="1997" name="Cell">
        <title>Histone deacetylases and SAP18, a novel polypeptide, are components of a human Sin3 complex.</title>
        <authorList>
            <person name="Zhang Y."/>
            <person name="Iratni R."/>
            <person name="Erdjument-Bromage H."/>
            <person name="Tempst P."/>
            <person name="Reinberg D."/>
        </authorList>
    </citation>
    <scope>PARTIAL PROTEIN SEQUENCE</scope>
    <scope>IDENTIFICATION IN THE SIN3 HDAC COMPLEX</scope>
</reference>
<reference key="6">
    <citation type="journal article" date="1998" name="Cell">
        <title>The dermatomyositis-specific autoantigen Mi2 is a component of a complex containing histone deacetylase and nucleosome remodeling activities.</title>
        <authorList>
            <person name="Zhang Y."/>
            <person name="LeRoy G."/>
            <person name="Seelig H.-P."/>
            <person name="Lane W.S."/>
            <person name="Reinberg D."/>
        </authorList>
    </citation>
    <scope>IDENTIFICATION IN THE NURD COMPLEX</scope>
</reference>
<reference key="7">
    <citation type="journal article" date="1998" name="Curr. Biol.">
        <title>Nucleosomal DNA regulates the core-histone-binding subunit of the human Hat1 acetyltransferase.</title>
        <authorList>
            <person name="Verreault A."/>
            <person name="Kaufman P.D."/>
            <person name="Kobayashi R."/>
            <person name="Stillman B."/>
        </authorList>
    </citation>
    <scope>INTERACTION WITH HAT1 AND HISTONE H4</scope>
</reference>
<reference key="8">
    <citation type="journal article" date="1998" name="Mol. Cell">
        <title>SAP30, a novel protein conserved between human and yeast, is a component of a histone deacetylase complex.</title>
        <authorList>
            <person name="Zhang Y."/>
            <person name="Sun Z.-W."/>
            <person name="Iratni R."/>
            <person name="Erdjument-Bromage H."/>
            <person name="Tempst P."/>
            <person name="Hampsey M."/>
            <person name="Reinberg D."/>
        </authorList>
    </citation>
    <scope>IDENTIFICATION IN THE SIN3 HDAC COMPLEX</scope>
</reference>
<reference key="9">
    <citation type="journal article" date="1999" name="Genes Dev.">
        <title>Analysis of the NuRD subunits reveals a histone deacetylase core complex and a connection with DNA methylation.</title>
        <authorList>
            <person name="Zhang Y."/>
            <person name="Ng H.-H."/>
            <person name="Erdjument-Bromage H."/>
            <person name="Tempst P."/>
            <person name="Bird A."/>
            <person name="Reinberg D."/>
        </authorList>
    </citation>
    <scope>IDENTIFICATION IN THE NURD COMPLEX</scope>
</reference>
<reference key="10">
    <citation type="journal article" date="1999" name="Proc. Natl. Acad. Sci. U.S.A.">
        <title>BRCA1 interacts with components of the histone deacetylase complex.</title>
        <authorList>
            <person name="Yarden R.I."/>
            <person name="Brody L.C."/>
        </authorList>
    </citation>
    <scope>INTERACTION WITH BRCA1 AND RB1</scope>
</reference>
<reference key="11">
    <citation type="journal article" date="2000" name="Mol. Cell. Biol.">
        <title>Histone binding protein RbAp48 interacts with a complex of CREB binding protein and phosphorylated CREB.</title>
        <authorList>
            <person name="Zhang Q."/>
            <person name="Vo N."/>
            <person name="Goodman R.H."/>
        </authorList>
    </citation>
    <scope>FUNCTION</scope>
    <scope>INTERACTION WITH CREBBP</scope>
</reference>
<reference key="12">
    <citation type="journal article" date="2001" name="J. Biol. Chem.">
        <title>Stable histone deacetylase complexes distinguished by the presence of SANT domain proteins CoREST/kiaa0071 and Mta-L1.</title>
        <authorList>
            <person name="Humphrey G.W."/>
            <person name="Wang Y."/>
            <person name="Russanova V.R."/>
            <person name="Hirai T."/>
            <person name="Qin J."/>
            <person name="Nakatani Y."/>
            <person name="Howard B.H."/>
        </authorList>
    </citation>
    <scope>IDENTIFICATION IN THE NURD COMPLEX</scope>
</reference>
<reference key="13">
    <citation type="journal article" date="2001" name="J. Biol. Chem.">
        <title>Differential association of products of alternative transcripts of the candidate tumor suppressor ING1 with the mSin3/HDAC1 transcriptional corepressor complex.</title>
        <authorList>
            <person name="Skowyra D."/>
            <person name="Zeremski M."/>
            <person name="Neznanov N."/>
            <person name="Li M."/>
            <person name="Choi Y."/>
            <person name="Uesugi M."/>
            <person name="Hauser C.A."/>
            <person name="Gu W."/>
            <person name="Gudkov A.V."/>
            <person name="Qin J."/>
        </authorList>
    </citation>
    <scope>IDENTIFICATION IN THE SIN3 HDAC COMPLEX</scope>
</reference>
<reference key="14">
    <citation type="journal article" date="2002" name="Genes Dev.">
        <title>Histone methyltransferase activity associated with a human multiprotein complex containing the Enhancer of Zeste protein.</title>
        <authorList>
            <person name="Kuzmichev A."/>
            <person name="Nishioka K."/>
            <person name="Erdjument-Bromage H."/>
            <person name="Tempst P."/>
            <person name="Reinberg D."/>
        </authorList>
    </citation>
    <scope>IDENTIFICATION IN THE PRC2/EED-EZH2 COMPLEX WITH EED; EZH2; RBBP4 AND SUZ12</scope>
    <scope>METHYLTRANSFERASE ACTIVITY OF THE COMPLEX</scope>
</reference>
<reference key="15">
    <citation type="journal article" date="2002" name="Mol. Cell. Biol.">
        <title>Role of the Sin3-histone deacetylase complex in growth regulation by the candidate tumor suppressor p33(ING1).</title>
        <authorList>
            <person name="Kuzmichev A."/>
            <person name="Zhang Y."/>
            <person name="Erdjument-Bromage H."/>
            <person name="Tempst P."/>
            <person name="Reinberg D."/>
        </authorList>
    </citation>
    <scope>IDENTIFICATION IN THE SIN3 HDAC COMPLEX</scope>
</reference>
<reference key="16">
    <citation type="journal article" date="2003" name="EMBO J.">
        <title>Isolation of human NURF: a regulator of Engrailed gene expression.</title>
        <authorList>
            <person name="Barak O."/>
            <person name="Lazzaro M.A."/>
            <person name="Lane W.S."/>
            <person name="Speicher D.W."/>
            <person name="Picketts D.J."/>
            <person name="Shiekhattar R."/>
        </authorList>
    </citation>
    <scope>IDENTIFICATION IN THE NURF-1 COMPLEX</scope>
    <scope>INTERACTION WITH SMARCA1</scope>
    <scope>IDENTIFICATION BY MASS SPECTROMETRY</scope>
</reference>
<reference key="17">
    <citation type="journal article" date="2003" name="J. Biol. Chem.">
        <title>The metastasis-associated proteins 1 and 2 form distinct protein complexes with histone deacetylase activity.</title>
        <authorList>
            <person name="Yao Y.-L."/>
            <person name="Yang W.-M."/>
        </authorList>
    </citation>
    <scope>IDENTIFICATION IN THE MTA1 HDAC COMPLEX</scope>
</reference>
<reference key="18">
    <citation type="journal article" date="2004" name="J. Biol. Chem.">
        <title>A tissue-specific, naturally occurring human SNF2L variant inactivates chromatin remodeling.</title>
        <authorList>
            <person name="Barak O."/>
            <person name="Lazzaro M.A."/>
            <person name="Cooch N.S."/>
            <person name="Picketts D.J."/>
            <person name="Shiekhattar R."/>
        </authorList>
    </citation>
    <scope>IDENTIFICATION IN COMPLEXES WITH SMARCA1</scope>
    <scope>INTERACTION WITH SMARCA1</scope>
</reference>
<reference key="19">
    <citation type="journal article" date="2004" name="J. Biol. Chem.">
        <title>MBD3L1 is a transcriptional repressor that interacts with methyl-CpG-binding protein 2 (MBD2) and components of the NuRD complex.</title>
        <authorList>
            <person name="Jiang C.-L."/>
            <person name="Jin S.-G."/>
            <person name="Pfeifer G.P."/>
        </authorList>
    </citation>
    <scope>INTERACTION WITH MBD3L1</scope>
</reference>
<reference key="20">
    <citation type="journal article" date="2005" name="J. Biol. Chem.">
        <title>MBD3L2 interacts with MBD3 and components of the NuRD complex and can oppose MBD2-MeCP1-mediated methylation silencing.</title>
        <authorList>
            <person name="Jin S.-G."/>
            <person name="Jiang C.-L."/>
            <person name="Rauch T."/>
            <person name="Li H."/>
            <person name="Pfeifer G.P."/>
        </authorList>
    </citation>
    <scope>INTERACTION WITH MBD3L2</scope>
</reference>
<reference key="21">
    <citation type="journal article" date="2006" name="Mol. Cell. Biol.">
        <title>MBD2/NuRD and MBD3/NuRD, two distinct complexes with different biochemical and functional properties.</title>
        <authorList>
            <person name="Le Guezennec X."/>
            <person name="Vermeulen M."/>
            <person name="Brinkman A.B."/>
            <person name="Hoeijmakers W.A."/>
            <person name="Cohen A."/>
            <person name="Lasonder E."/>
            <person name="Stunnenberg H.G."/>
        </authorList>
    </citation>
    <scope>FUNCTION</scope>
    <scope>IDENTIFICATION IN THE NURD COMPLEX</scope>
    <scope>IDENTIFICATION BY MASS SPECTROMETRY</scope>
</reference>
<reference key="22">
    <citation type="journal article" date="2008" name="Mol. Cell">
        <title>Kinase-selective enrichment enables quantitative phosphoproteomics of the kinome across the cell cycle.</title>
        <authorList>
            <person name="Daub H."/>
            <person name="Olsen J.V."/>
            <person name="Bairlein M."/>
            <person name="Gnad F."/>
            <person name="Oppermann F.S."/>
            <person name="Korner R."/>
            <person name="Greff Z."/>
            <person name="Keri G."/>
            <person name="Stemmann O."/>
            <person name="Mann M."/>
        </authorList>
    </citation>
    <scope>PHOSPHORYLATION [LARGE SCALE ANALYSIS] AT SER-354</scope>
    <scope>IDENTIFICATION BY MASS SPECTROMETRY [LARGE SCALE ANALYSIS]</scope>
    <source>
        <tissue>Cervix carcinoma</tissue>
    </source>
</reference>
<reference key="23">
    <citation type="journal article" date="2008" name="Proc. Natl. Acad. Sci. U.S.A.">
        <title>A quantitative atlas of mitotic phosphorylation.</title>
        <authorList>
            <person name="Dephoure N."/>
            <person name="Zhou C."/>
            <person name="Villen J."/>
            <person name="Beausoleil S.A."/>
            <person name="Bakalarski C.E."/>
            <person name="Elledge S.J."/>
            <person name="Gygi S.P."/>
        </authorList>
    </citation>
    <scope>PHOSPHORYLATION [LARGE SCALE ANALYSIS] AT SER-354</scope>
    <scope>IDENTIFICATION BY MASS SPECTROMETRY [LARGE SCALE ANALYSIS]</scope>
    <source>
        <tissue>Cervix carcinoma</tissue>
    </source>
</reference>
<reference key="24">
    <citation type="journal article" date="2009" name="Anal. Chem.">
        <title>Lys-N and trypsin cover complementary parts of the phosphoproteome in a refined SCX-based approach.</title>
        <authorList>
            <person name="Gauci S."/>
            <person name="Helbig A.O."/>
            <person name="Slijper M."/>
            <person name="Krijgsveld J."/>
            <person name="Heck A.J."/>
            <person name="Mohammed S."/>
        </authorList>
    </citation>
    <scope>ACETYLATION [LARGE SCALE ANALYSIS] AT ALA-2</scope>
    <scope>CLEAVAGE OF INITIATOR METHIONINE [LARGE SCALE ANALYSIS]</scope>
    <scope>IDENTIFICATION BY MASS SPECTROMETRY [LARGE SCALE ANALYSIS]</scope>
</reference>
<reference key="25">
    <citation type="journal article" date="2009" name="Science">
        <title>Lysine acetylation targets protein complexes and co-regulates major cellular functions.</title>
        <authorList>
            <person name="Choudhary C."/>
            <person name="Kumar C."/>
            <person name="Gnad F."/>
            <person name="Nielsen M.L."/>
            <person name="Rehman M."/>
            <person name="Walther T.C."/>
            <person name="Olsen J.V."/>
            <person name="Mann M."/>
        </authorList>
    </citation>
    <scope>ACETYLATION [LARGE SCALE ANALYSIS] AT LYS-4</scope>
    <scope>IDENTIFICATION BY MASS SPECTROMETRY [LARGE SCALE ANALYSIS]</scope>
</reference>
<reference key="26">
    <citation type="journal article" date="2010" name="Mol. Biosyst.">
        <title>CDK2AP1/DOC-1 is a bona fide subunit of the Mi-2/NuRD complex.</title>
        <authorList>
            <person name="Spruijt C.G."/>
            <person name="Bartels S.J."/>
            <person name="Brinkman A.B."/>
            <person name="Tjeertes J.V."/>
            <person name="Poser I."/>
            <person name="Stunnenberg H.G."/>
            <person name="Vermeulen M."/>
        </authorList>
    </citation>
    <scope>INTERACTION WITH CDK2AP1</scope>
    <scope>IDENTIFICATION BY MASS SPECTROMETRY</scope>
    <scope>SUBCELLULAR LOCATION</scope>
</reference>
<reference key="27">
    <citation type="journal article" date="2010" name="Sci. Signal.">
        <title>Quantitative phosphoproteomics reveals widespread full phosphorylation site occupancy during mitosis.</title>
        <authorList>
            <person name="Olsen J.V."/>
            <person name="Vermeulen M."/>
            <person name="Santamaria A."/>
            <person name="Kumar C."/>
            <person name="Miller M.L."/>
            <person name="Jensen L.J."/>
            <person name="Gnad F."/>
            <person name="Cox J."/>
            <person name="Jensen T.S."/>
            <person name="Nigg E.A."/>
            <person name="Brunak S."/>
            <person name="Mann M."/>
        </authorList>
    </citation>
    <scope>ACETYLATION [LARGE SCALE ANALYSIS] AT ALA-2 (ISOFORM 2)</scope>
    <scope>PHOSPHORYLATION [LARGE SCALE ANALYSIS] AT SER-354</scope>
    <scope>PHOSPHORYLATION [LARGE SCALE ANALYSIS] AT SER-13 (ISOFORM 2)</scope>
    <scope>CLEAVAGE OF INITIATOR METHIONINE [LARGE SCALE ANALYSIS] (ISOFORM 2)</scope>
    <scope>IDENTIFICATION BY MASS SPECTROMETRY [LARGE SCALE ANALYSIS]</scope>
    <source>
        <tissue>Cervix carcinoma</tissue>
    </source>
</reference>
<reference key="28">
    <citation type="journal article" date="2011" name="BMC Syst. Biol.">
        <title>Initial characterization of the human central proteome.</title>
        <authorList>
            <person name="Burkard T.R."/>
            <person name="Planyavsky M."/>
            <person name="Kaupe I."/>
            <person name="Breitwieser F.P."/>
            <person name="Buerckstuemmer T."/>
            <person name="Bennett K.L."/>
            <person name="Superti-Furga G."/>
            <person name="Colinge J."/>
        </authorList>
    </citation>
    <scope>IDENTIFICATION BY MASS SPECTROMETRY [LARGE SCALE ANALYSIS]</scope>
</reference>
<reference key="29">
    <citation type="journal article" date="2011" name="Sci. Signal.">
        <title>System-wide temporal characterization of the proteome and phosphoproteome of human embryonic stem cell differentiation.</title>
        <authorList>
            <person name="Rigbolt K.T."/>
            <person name="Prokhorova T.A."/>
            <person name="Akimov V."/>
            <person name="Henningsen J."/>
            <person name="Johansen P.T."/>
            <person name="Kratchmarova I."/>
            <person name="Kassem M."/>
            <person name="Mann M."/>
            <person name="Olsen J.V."/>
            <person name="Blagoev B."/>
        </authorList>
    </citation>
    <scope>ACETYLATION [LARGE SCALE ANALYSIS] AT ALA-2</scope>
    <scope>PHOSPHORYLATION [LARGE SCALE ANALYSIS] AT SER-3</scope>
    <scope>CLEAVAGE OF INITIATOR METHIONINE [LARGE SCALE ANALYSIS]</scope>
    <scope>IDENTIFICATION BY MASS SPECTROMETRY [LARGE SCALE ANALYSIS]</scope>
</reference>
<reference key="30">
    <citation type="journal article" date="2012" name="Proc. Natl. Acad. Sci. U.S.A.">
        <title>N-terminal acetylome analyses and functional insights of the N-terminal acetyltransferase NatB.</title>
        <authorList>
            <person name="Van Damme P."/>
            <person name="Lasa M."/>
            <person name="Polevoda B."/>
            <person name="Gazquez C."/>
            <person name="Elosegui-Artola A."/>
            <person name="Kim D.S."/>
            <person name="De Juan-Pardo E."/>
            <person name="Demeyer K."/>
            <person name="Hole K."/>
            <person name="Larrea E."/>
            <person name="Timmerman E."/>
            <person name="Prieto J."/>
            <person name="Arnesen T."/>
            <person name="Sherman F."/>
            <person name="Gevaert K."/>
            <person name="Aldabe R."/>
        </authorList>
    </citation>
    <scope>ACETYLATION [LARGE SCALE ANALYSIS] AT ALA-2</scope>
    <scope>CLEAVAGE OF INITIATOR METHIONINE [LARGE SCALE ANALYSIS]</scope>
    <scope>IDENTIFICATION BY MASS SPECTROMETRY [LARGE SCALE ANALYSIS]</scope>
</reference>
<reference key="31">
    <citation type="journal article" date="2013" name="J. Proteome Res.">
        <title>Toward a comprehensive characterization of a human cancer cell phosphoproteome.</title>
        <authorList>
            <person name="Zhou H."/>
            <person name="Di Palma S."/>
            <person name="Preisinger C."/>
            <person name="Peng M."/>
            <person name="Polat A.N."/>
            <person name="Heck A.J."/>
            <person name="Mohammed S."/>
        </authorList>
    </citation>
    <scope>PHOSPHORYLATION [LARGE SCALE ANALYSIS] AT SER-3; THR-10 AND SER-354</scope>
    <scope>IDENTIFICATION BY MASS SPECTROMETRY [LARGE SCALE ANALYSIS]</scope>
    <source>
        <tissue>Cervix carcinoma</tissue>
        <tissue>Erythroleukemia</tissue>
    </source>
</reference>
<reference key="32">
    <citation type="journal article" date="2014" name="J. Proteomics">
        <title>An enzyme assisted RP-RPLC approach for in-depth analysis of human liver phosphoproteome.</title>
        <authorList>
            <person name="Bian Y."/>
            <person name="Song C."/>
            <person name="Cheng K."/>
            <person name="Dong M."/>
            <person name="Wang F."/>
            <person name="Huang J."/>
            <person name="Sun D."/>
            <person name="Wang L."/>
            <person name="Ye M."/>
            <person name="Zou H."/>
        </authorList>
    </citation>
    <scope>PHOSPHORYLATION [LARGE SCALE ANALYSIS] AT SER-95</scope>
    <scope>IDENTIFICATION BY MASS SPECTROMETRY [LARGE SCALE ANALYSIS]</scope>
    <source>
        <tissue>Liver</tissue>
    </source>
</reference>
<reference key="33">
    <citation type="journal article" date="2015" name="Cell Rep.">
        <title>SUMO-2 orchestrates chromatin modifiers in response to DNA damage.</title>
        <authorList>
            <person name="Hendriks I.A."/>
            <person name="Treffers L.W."/>
            <person name="Verlaan-de Vries M."/>
            <person name="Olsen J.V."/>
            <person name="Vertegaal A.C."/>
        </authorList>
    </citation>
    <scope>SUMOYLATION [LARGE SCALE ANALYSIS] AT LYS-159</scope>
    <scope>IDENTIFICATION BY MASS SPECTROMETRY [LARGE SCALE ANALYSIS]</scope>
</reference>
<reference key="34">
    <citation type="journal article" date="2015" name="Dev. Cell">
        <title>Dynamic phosphorylation of CENP-A at Ser68 orchestrates its cell-cycle-dependent deposition at centromeres.</title>
        <authorList>
            <person name="Yu Z."/>
            <person name="Zhou X."/>
            <person name="Wang W."/>
            <person name="Deng W."/>
            <person name="Fang J."/>
            <person name="Hu H."/>
            <person name="Wang Z."/>
            <person name="Li S."/>
            <person name="Cui L."/>
            <person name="Shen J."/>
            <person name="Zhai L."/>
            <person name="Peng S."/>
            <person name="Wong J."/>
            <person name="Dong S."/>
            <person name="Yuan Z."/>
            <person name="Ou G."/>
            <person name="Zhang X."/>
            <person name="Xu P."/>
            <person name="Lou J."/>
            <person name="Yang N."/>
            <person name="Chen P."/>
            <person name="Xu R.M."/>
            <person name="Li G."/>
        </authorList>
    </citation>
    <scope>INTERACTION WITH CENPA</scope>
</reference>
<reference key="35">
    <citation type="journal article" date="2017" name="Nat. Struct. Mol. Biol.">
        <title>Site-specific mapping of the human SUMO proteome reveals co-modification with phosphorylation.</title>
        <authorList>
            <person name="Hendriks I.A."/>
            <person name="Lyon D."/>
            <person name="Young C."/>
            <person name="Jensen L.J."/>
            <person name="Vertegaal A.C."/>
            <person name="Nielsen M.L."/>
        </authorList>
    </citation>
    <scope>SUMOYLATION [LARGE SCALE ANALYSIS] AT LYS-4; LYS-101; LYS-155 AND LYS-159</scope>
    <scope>IDENTIFICATION BY MASS SPECTROMETRY [LARGE SCALE ANALYSIS]</scope>
</reference>
<reference key="36">
    <citation type="journal article" date="2017" name="Nucleic Acids Res.">
        <title>CHD3 and CHD4 form distinct NuRD complexes with different yet overlapping functionality.</title>
        <authorList>
            <person name="Hoffmeister H."/>
            <person name="Fuchs A."/>
            <person name="Erdel F."/>
            <person name="Pinz S."/>
            <person name="Groebner-Ferreira R."/>
            <person name="Bruckmann A."/>
            <person name="Deutzmann R."/>
            <person name="Schwartz U."/>
            <person name="Maldonado R."/>
            <person name="Huber C."/>
            <person name="Dendorfer A.S."/>
            <person name="Rippe K."/>
            <person name="Laengst G."/>
        </authorList>
    </citation>
    <scope>FUNCTION</scope>
    <scope>IDENTIFICATION IN THE NURD COMPLEX</scope>
    <scope>INTERACTION WITH CHD3 AND CHD4</scope>
    <scope>IDENTIFICATION BY MASS SPECTROMETRY</scope>
    <scope>SUBCELLULAR LOCATION</scope>
</reference>
<reference key="37">
    <citation type="journal article" date="2021" name="FEBS J.">
        <title>Cross-linking mass spectrometry reveals the structural topology of peripheral NuRD subunits relative to the core complex.</title>
        <authorList>
            <person name="Spruijt C.G."/>
            <person name="Graewe C."/>
            <person name="Kleinendorst S.C."/>
            <person name="Baltissen M.P.A."/>
            <person name="Vermeulen M."/>
        </authorList>
    </citation>
    <scope>IDENTIFICATION IN THE NURD COMPLEX</scope>
    <scope>IDENTIFICATION BY MASS SPECTROMETRY</scope>
    <scope>SUBCELLULAR LOCATION</scope>
</reference>
<reference key="38">
    <citation type="journal article" date="2022" name="Am. J. Hum. Genet.">
        <title>Large-scale analyses of the X chromosome in 2,354 infertile men discover recurrently affected genes associated with spermatogenic failure.</title>
        <authorList>
            <consortium name="GEMINI Consortium"/>
            <person name="Riera-Escamilla A."/>
            <person name="Vockel M."/>
            <person name="Nagirnaja L."/>
            <person name="Xavier M.J."/>
            <person name="Carbonell A."/>
            <person name="Moreno-Mendoza D."/>
            <person name="Pybus M."/>
            <person name="Farnetani G."/>
            <person name="Rosta V."/>
            <person name="Cioppi F."/>
            <person name="Friedrich C."/>
            <person name="Oud M.S."/>
            <person name="van der Heijden G.W."/>
            <person name="Soave A."/>
            <person name="Diemer T."/>
            <person name="Ars E."/>
            <person name="Sanchez-Curbelo J."/>
            <person name="Kliesch S."/>
            <person name="O'Bryan M.K."/>
            <person name="Ruiz-Castane E."/>
            <person name="Azorin F."/>
            <person name="Veltman J.A."/>
            <person name="Aston K.I."/>
            <person name="Conrad D.F."/>
            <person name="Tuettelmann F."/>
            <person name="Krausz C."/>
        </authorList>
    </citation>
    <scope>INVOLVEMENT IN SPGFX9</scope>
    <scope>VARIANTS SPGFX9 LYS-25 DEL; HIS-47; LYS-47; LYS-285; HIS-301 AND GLY-ASN-373 INS</scope>
</reference>
<reference key="39">
    <citation type="journal article" date="2023" name="J. Clin. Invest.">
        <title>X-linked RBBP7 mutation causes maturation arrest and testicular tumors.</title>
        <authorList>
            <person name="Li J."/>
            <person name="Zheng H."/>
            <person name="Hou J."/>
            <person name="Chen J."/>
            <person name="Zhang F."/>
            <person name="Yang X."/>
            <person name="Jin F."/>
            <person name="Xi Y."/>
        </authorList>
    </citation>
    <scope>INVOLVEMENT IN SPGFX9</scope>
</reference>
<reference key="40">
    <citation type="journal article" date="2008" name="Structure">
        <title>Structural basis for the recognition of histone H4 by the histone-chaperone RbAp46.</title>
        <authorList>
            <person name="Murzina N.V."/>
            <person name="Pei X.Y."/>
            <person name="Zhang W."/>
            <person name="Sparkes M."/>
            <person name="Vicente-Garcia J."/>
            <person name="Pratap J.V."/>
            <person name="McLaughlin S.H."/>
            <person name="Ben-Shahar T.R."/>
            <person name="Verreault A."/>
            <person name="Luisi B.F."/>
            <person name="Laue E.D."/>
        </authorList>
    </citation>
    <scope>X-RAY CRYSTALLOGRAPHY (2.4 ANGSTROMS) OF 2-411 IN COMPLEX WITH HISTONE H4</scope>
    <scope>DOMAINS WD REPEATS</scope>
</reference>
<feature type="initiator methionine" description="Removed" evidence="30 33 34">
    <location>
        <position position="1"/>
    </location>
</feature>
<feature type="chain" id="PRO_0000051195" description="Histone-binding protein RBBP7">
    <location>
        <begin position="2"/>
        <end position="425"/>
    </location>
</feature>
<feature type="repeat" description="WD 1">
    <location>
        <begin position="47"/>
        <end position="122"/>
    </location>
</feature>
<feature type="repeat" description="WD 2">
    <location>
        <begin position="128"/>
        <end position="173"/>
    </location>
</feature>
<feature type="repeat" description="WD 3">
    <location>
        <begin position="181"/>
        <end position="217"/>
    </location>
</feature>
<feature type="repeat" description="WD 4">
    <location>
        <begin position="228"/>
        <end position="269"/>
    </location>
</feature>
<feature type="repeat" description="WD 5">
    <location>
        <begin position="275"/>
        <end position="312"/>
    </location>
</feature>
<feature type="repeat" description="WD 6">
    <location>
        <begin position="318"/>
        <end position="369"/>
    </location>
</feature>
<feature type="repeat" description="WD 7">
    <location>
        <begin position="376"/>
        <end position="403"/>
    </location>
</feature>
<feature type="modified residue" description="N-acetylalanine" evidence="30 33 34">
    <location>
        <position position="2"/>
    </location>
</feature>
<feature type="modified residue" description="Phosphoserine" evidence="33 35">
    <location>
        <position position="3"/>
    </location>
</feature>
<feature type="modified residue" description="N6-acetyllysine; alternate" evidence="31">
    <location>
        <position position="4"/>
    </location>
</feature>
<feature type="modified residue" description="Phosphothreonine" evidence="35">
    <location>
        <position position="10"/>
    </location>
</feature>
<feature type="modified residue" description="Phosphoserine" evidence="36">
    <location>
        <position position="95"/>
    </location>
</feature>
<feature type="modified residue" description="N6-acetyllysine" evidence="1">
    <location>
        <position position="119"/>
    </location>
</feature>
<feature type="modified residue" description="N6-acetyllysine; alternate" evidence="1">
    <location>
        <position position="159"/>
    </location>
</feature>
<feature type="modified residue" description="Phosphoserine" evidence="28 29 32 35">
    <location>
        <position position="354"/>
    </location>
</feature>
<feature type="cross-link" description="Glycyl lysine isopeptide (Lys-Gly) (interchain with G-Cter in SUMO2); alternate" evidence="38">
    <location>
        <position position="4"/>
    </location>
</feature>
<feature type="cross-link" description="Glycyl lysine isopeptide (Lys-Gly) (interchain with G-Cter in ubiquitin); alternate">
    <location>
        <position position="4"/>
    </location>
</feature>
<feature type="cross-link" description="Glycyl lysine isopeptide (Lys-Gly) (interchain with G-Cter in SUMO2)" evidence="38">
    <location>
        <position position="101"/>
    </location>
</feature>
<feature type="cross-link" description="Glycyl lysine isopeptide (Lys-Gly) (interchain with G-Cter in SUMO2)" evidence="38">
    <location>
        <position position="155"/>
    </location>
</feature>
<feature type="cross-link" description="Glycyl lysine isopeptide (Lys-Gly) (interchain with G-Cter in SUMO2); alternate" evidence="37 38">
    <location>
        <position position="159"/>
    </location>
</feature>
<feature type="splice variant" id="VSP_043016" description="In isoform 2." evidence="26">
    <original>MASKEM</original>
    <variation>MAAEAGVVGAGASPDGDWRDQACGLLLHVHLSSRLGRAAPVRTGRHLRTV</variation>
    <location>
        <begin position="1"/>
        <end position="6"/>
    </location>
</feature>
<feature type="sequence variant" id="VAR_090333" description="In SPGFX9; uncertain significance." evidence="19">
    <location>
        <position position="25"/>
    </location>
</feature>
<feature type="sequence variant" id="VAR_090334" description="In SPGFX9; uncertain significance." evidence="19">
    <original>Q</original>
    <variation>H</variation>
    <location>
        <position position="47"/>
    </location>
</feature>
<feature type="sequence variant" id="VAR_090335" description="In SPGFX9; uncertain significance." evidence="19">
    <original>Q</original>
    <variation>K</variation>
    <location>
        <position position="47"/>
    </location>
</feature>
<feature type="sequence variant" id="VAR_090336" description="In SPGFX9; uncertain significance." evidence="19">
    <original>E</original>
    <variation>K</variation>
    <location>
        <position position="285"/>
    </location>
</feature>
<feature type="sequence variant" id="VAR_090337" description="In SPGFX9; uncertain significance." evidence="19">
    <original>D</original>
    <variation>H</variation>
    <location>
        <position position="301"/>
    </location>
</feature>
<feature type="sequence variant" id="VAR_090338" description="In SPGFX9; uncertain significance." evidence="19">
    <original>T</original>
    <variation>TGN</variation>
    <location>
        <position position="373"/>
    </location>
</feature>
<feature type="helix" evidence="40">
    <location>
        <begin position="10"/>
        <end position="25"/>
    </location>
</feature>
<feature type="helix" evidence="40">
    <location>
        <begin position="27"/>
        <end position="30"/>
    </location>
</feature>
<feature type="strand" evidence="40">
    <location>
        <begin position="31"/>
        <end position="38"/>
    </location>
</feature>
<feature type="strand" evidence="40">
    <location>
        <begin position="46"/>
        <end position="53"/>
    </location>
</feature>
<feature type="strand" evidence="40">
    <location>
        <begin position="59"/>
        <end position="68"/>
    </location>
</feature>
<feature type="strand" evidence="40">
    <location>
        <begin position="72"/>
        <end position="74"/>
    </location>
</feature>
<feature type="strand" evidence="40">
    <location>
        <begin position="76"/>
        <end position="86"/>
    </location>
</feature>
<feature type="strand" evidence="40">
    <location>
        <begin position="113"/>
        <end position="124"/>
    </location>
</feature>
<feature type="strand" evidence="40">
    <location>
        <begin position="127"/>
        <end position="132"/>
    </location>
</feature>
<feature type="strand" evidence="40">
    <location>
        <begin position="135"/>
        <end position="142"/>
    </location>
</feature>
<feature type="strand" evidence="40">
    <location>
        <begin position="144"/>
        <end position="152"/>
    </location>
</feature>
<feature type="helix" evidence="40">
    <location>
        <begin position="153"/>
        <end position="155"/>
    </location>
</feature>
<feature type="strand" evidence="40">
    <location>
        <begin position="169"/>
        <end position="173"/>
    </location>
</feature>
<feature type="strand" evidence="40">
    <location>
        <begin position="180"/>
        <end position="184"/>
    </location>
</feature>
<feature type="strand" evidence="40">
    <location>
        <begin position="186"/>
        <end position="188"/>
    </location>
</feature>
<feature type="strand" evidence="40">
    <location>
        <begin position="191"/>
        <end position="195"/>
    </location>
</feature>
<feature type="strand" evidence="40">
    <location>
        <begin position="201"/>
        <end position="205"/>
    </location>
</feature>
<feature type="strand" evidence="40">
    <location>
        <begin position="215"/>
        <end position="217"/>
    </location>
</feature>
<feature type="strand" evidence="40">
    <location>
        <begin position="219"/>
        <end position="222"/>
    </location>
</feature>
<feature type="strand" evidence="40">
    <location>
        <begin position="229"/>
        <end position="234"/>
    </location>
</feature>
<feature type="strand" evidence="40">
    <location>
        <begin position="241"/>
        <end position="246"/>
    </location>
</feature>
<feature type="strand" evidence="40">
    <location>
        <begin position="249"/>
        <end position="255"/>
    </location>
</feature>
<feature type="strand" evidence="40">
    <location>
        <begin position="261"/>
        <end position="263"/>
    </location>
</feature>
<feature type="strand" evidence="40">
    <location>
        <begin position="265"/>
        <end position="269"/>
    </location>
</feature>
<feature type="strand" evidence="40">
    <location>
        <begin position="275"/>
        <end position="280"/>
    </location>
</feature>
<feature type="strand" evidence="40">
    <location>
        <begin position="285"/>
        <end position="292"/>
    </location>
</feature>
<feature type="strand" evidence="40">
    <location>
        <begin position="295"/>
        <end position="301"/>
    </location>
</feature>
<feature type="strand" evidence="39">
    <location>
        <begin position="305"/>
        <end position="307"/>
    </location>
</feature>
<feature type="strand" evidence="40">
    <location>
        <begin position="309"/>
        <end position="313"/>
    </location>
</feature>
<feature type="strand" evidence="40">
    <location>
        <begin position="319"/>
        <end position="324"/>
    </location>
</feature>
<feature type="strand" evidence="40">
    <location>
        <begin position="331"/>
        <end position="336"/>
    </location>
</feature>
<feature type="strand" evidence="40">
    <location>
        <begin position="341"/>
        <end position="345"/>
    </location>
</feature>
<feature type="helix" evidence="40">
    <location>
        <begin position="346"/>
        <end position="348"/>
    </location>
</feature>
<feature type="helix" evidence="40">
    <location>
        <begin position="355"/>
        <end position="360"/>
    </location>
</feature>
<feature type="strand" evidence="40">
    <location>
        <begin position="365"/>
        <end position="369"/>
    </location>
</feature>
<feature type="strand" evidence="40">
    <location>
        <begin position="376"/>
        <end position="381"/>
    </location>
</feature>
<feature type="strand" evidence="40">
    <location>
        <begin position="383"/>
        <end position="385"/>
    </location>
</feature>
<feature type="strand" evidence="40">
    <location>
        <begin position="388"/>
        <end position="393"/>
    </location>
</feature>
<feature type="strand" evidence="40">
    <location>
        <begin position="396"/>
        <end position="403"/>
    </location>
</feature>
<feature type="helix" evidence="40">
    <location>
        <begin position="405"/>
        <end position="408"/>
    </location>
</feature>
<feature type="initiator methionine" description="Removed" evidence="32">
    <location sequence="Q16576-2">
        <position position="1"/>
    </location>
</feature>
<feature type="modified residue" description="N-acetylalanine" evidence="32">
    <location sequence="Q16576-2">
        <position position="2"/>
    </location>
</feature>
<feature type="modified residue" description="Phosphoserine" evidence="32">
    <location sequence="Q16576-2">
        <position position="13"/>
    </location>
</feature>
<comment type="function">
    <text evidence="4 13 17">Core histone-binding subunit that may target chromatin remodeling factors, histone acetyltransferases and histone deacetylases to their histone substrates in a manner that is regulated by nucleosomal DNA. Component of several complexes which regulate chromatin metabolism. These include the type B histone acetyltransferase (HAT) complex, which is required for chromatin assembly following DNA replication; the core histone deacetylase (HDAC) complex, which promotes histone deacetylation and consequent transcriptional repression; the nucleosome remodeling and histone deacetylase complex (the NuRD complex), which promotes transcriptional repression by histone deacetylation and nucleosome remodeling; and the PRC2/EED-EZH2 complex, which promotes repression of homeotic genes during development; and the NURF (nucleosome remodeling factor) complex.</text>
</comment>
<comment type="subunit">
    <text evidence="1 2 3 4 5 6 7 8 9 10 11 12 13 14 15 16 17 18 21 22 23 24 25">Binds directly to helix 1 of the histone fold of histone H4, a region that is not accessible when H4 is in chromatin (PubMed:18571423, PubMed:9427644). Subunit of the type B histone acetyltransferase (HAT) complex, composed of RBBP7 and HAT1 (PubMed:9427644). Subunit of the core histone deacetylase (HDAC) complex, which is composed of HDAC1, HDAC2, RBBP4 and RBBP7. The core HDAC complex associates with SIN3A, ARID4B/SAP180, SAP18, SAP30, SAP130, SUDS3/SAP45 and possibly ARID4A/RBP1 and ING1 to form the SIN3 HDAC complex (PubMed:11118440, PubMed:11784859, PubMed:9150135, PubMed:9651585). Component of the nucleosome remodeling and deacetylase (NuRD) repressor complex, composed of core proteins MTA1, MTA2, MTA3, RBBP4, RBBP7, HDAC1, HDAC2, MBD2, MBD3, and peripherally associated proteins CDK2AP1, CDK2AP2, GATAD2A, GATAD2B, CHD3, CHD4 and CHD5 (PubMed:10444591, PubMed:11102443, PubMed:16428440, PubMed:28977666, PubMed:33283408, PubMed:9790534). The exact stoichiometry of the NuRD complex is unknown, and some subunits such as MBD2 and MBD3, GATAD2A and GATAD2B, and CHD3, CHD4 and CHD5 define mutually exclusive NuRD complexes (PubMed:16428440, PubMed:28977666, PubMed:33283408). The NuRD complex may interact with MBD3L1 (PubMed:15456747). The NuRD complex may interact with MBD3L2 (PubMed:15701600). Subunit of the PRC2/EED-EZH2 complex, which is composed of at least EED, EZH2, RBBP4, RBBP7 and SUZ12 (PubMed:12435631). The PRC2/EED-EZH2 complex may also associate with HDAC1 (PubMed:12435631). Component of the NURF-1 ISWI chromatin remodeling complex (also called the nucleosome-remodeling factor (NURF) complex) at least composed of SMARCA1 (isoform 2), BPTF, RBBP4 and RBBP7 (PubMed:14609955, PubMed:15310751). Within the complex interacts with isoform 2 of SMARCA1 (PubMed:14609955, PubMed:15310751). Component of the BPFT-SMARCA1 complex at least composed of SMARCA1 (isoform 1), BPFT, RBBP4 and RBBP7; the complex is catalytically inactive and does not remodel chromatin (PubMed:15310751). Within the complex interacts with isoform 1 of SMARCA1 (PubMed:15310751). Interacts with BRCA1 (PubMed:10220405). Interacts with CDK2AP1 (PubMed:20523938). Interacts with CENPA (PubMed:25556658). Interacts with CHD3 (PubMed:28977666). Interacts with CHD4 (PubMed:28977666). Interacts with CREBBP, and this interaction may be enhanced by the binding of phosphorylated CREB1 to CREBBP (PubMed:10866654). Interacts with HDAC7 (By similarity). Interacts with MTA1 (PubMed:12920132). Interacts with PWWP2B (By similarity). Interacts with RB1 (via viral protein-binding domain) (PubMed:10220405, PubMed:7503932). Interacts with SUV39H1 (By similarity).</text>
</comment>
<comment type="interaction">
    <interactant intactId="EBI-352227">
        <id>Q16576</id>
    </interactant>
    <interactant intactId="EBI-302023">
        <id>P62805</id>
        <label>H4C9</label>
    </interactant>
    <organismsDiffer>false</organismsDiffer>
    <experiments>9</experiments>
</comment>
<comment type="interaction">
    <interactant intactId="EBI-352227">
        <id>Q16576</id>
    </interactant>
    <interactant intactId="EBI-301834">
        <id>Q13547</id>
        <label>HDAC1</label>
    </interactant>
    <organismsDiffer>false</organismsDiffer>
    <experiments>12</experiments>
</comment>
<comment type="interaction">
    <interactant intactId="EBI-352227">
        <id>Q16576</id>
    </interactant>
    <interactant intactId="EBI-1783035">
        <id>O94776</id>
        <label>MTA2</label>
    </interactant>
    <organismsDiffer>false</organismsDiffer>
    <experiments>14</experiments>
</comment>
<comment type="interaction">
    <interactant intactId="EBI-352227">
        <id>Q16576</id>
    </interactant>
    <interactant intactId="EBI-5564776">
        <id>Q17R98</id>
        <label>ZNF827</label>
    </interactant>
    <organismsDiffer>false</organismsDiffer>
    <experiments>2</experiments>
</comment>
<comment type="interaction">
    <interactant intactId="EBI-352227">
        <id>Q16576</id>
    </interactant>
    <interactant intactId="EBI-302085">
        <id>P62799</id>
    </interactant>
    <organismsDiffer>true</organismsDiffer>
    <experiments>2</experiments>
</comment>
<comment type="subcellular location">
    <subcellularLocation>
        <location evidence="15 17 18">Nucleus</location>
    </subcellularLocation>
</comment>
<comment type="alternative products">
    <event type="alternative splicing"/>
    <isoform>
        <id>Q16576-1</id>
        <name>1</name>
        <sequence type="displayed"/>
    </isoform>
    <isoform>
        <id>Q16576-2</id>
        <name>2</name>
        <sequence type="described" ref="VSP_043016"/>
    </isoform>
</comment>
<comment type="disease" evidence="19 20">
    <disease id="DI-06981">
        <name>Spermatogenic failure, X-linked, 9</name>
        <acronym>SPGFX9</acronym>
        <description>A male infertility disorder characterized by spermatogenesis maturation arrest and non-obstructive azoospermia.</description>
        <dbReference type="MIM" id="301137"/>
    </disease>
    <text>The disease is caused by variants affecting the gene represented in this entry.</text>
</comment>
<comment type="similarity">
    <text evidence="27">Belongs to the WD repeat RBAP46/RBAP48/MSI1 family.</text>
</comment>
<comment type="online information" name="Atlas of Genetics and Cytogenetics in Oncology and Haematology">
    <link uri="https://atlasgeneticsoncology.org/gene/42065/rbbp7"/>
</comment>
<protein>
    <recommendedName>
        <fullName>Histone-binding protein RBBP7</fullName>
    </recommendedName>
    <alternativeName>
        <fullName>Histone acetyltransferase type B subunit 2</fullName>
    </alternativeName>
    <alternativeName>
        <fullName>Nucleosome-remodeling factor subunit RBAP46</fullName>
    </alternativeName>
    <alternativeName>
        <fullName>Retinoblastoma-binding protein 7</fullName>
        <shortName>RBBP-7</shortName>
    </alternativeName>
    <alternativeName>
        <fullName>Retinoblastoma-binding protein p46</fullName>
    </alternativeName>
</protein>
<sequence length="425" mass="47820">MASKEMFEDTVEERVINEEYKIWKKNTPFLYDLVMTHALQWPSLTVQWLPEVTKPEGKDYALHWLVLGTHTSDEQNHLVVARVHIPNDDAQFDASHCDSDKGEFGGFGSVTGKIECEIKINHEGEVNRARYMPQNPHIIATKTPSSDVLVFDYTKHPAKPDPSGECNPDLRLRGHQKEGYGLSWNSNLSGHLLSASDDHTVCLWDINAGPKEGKIVDAKAIFTGHSAVVEDVAWHLLHESLFGSVADDQKLMIWDTRSNTTSKPSHLVDAHTAEVNCLSFNPYSEFILATGSADKTVALWDLRNLKLKLHTFESHKDEIFQVHWSPHNETILASSGTDRRLNVWDLSKIGEEQSAEDAEDGPPELLFIHGGHTAKISDFSWNPNEPWVICSVSEDNIMQIWQMAENIYNDEESDVTTSELEGQGS</sequence>
<accession>Q16576</accession>
<accession>Q5JP00</accession>
<name>RBBP7_HUMAN</name>
<keyword id="KW-0002">3D-structure</keyword>
<keyword id="KW-0007">Acetylation</keyword>
<keyword id="KW-0025">Alternative splicing</keyword>
<keyword id="KW-0143">Chaperone</keyword>
<keyword id="KW-0156">Chromatin regulator</keyword>
<keyword id="KW-0903">Direct protein sequencing</keyword>
<keyword id="KW-0235">DNA replication</keyword>
<keyword id="KW-1017">Isopeptide bond</keyword>
<keyword id="KW-0539">Nucleus</keyword>
<keyword id="KW-0597">Phosphoprotein</keyword>
<keyword id="KW-1267">Proteomics identification</keyword>
<keyword id="KW-1185">Reference proteome</keyword>
<keyword id="KW-0677">Repeat</keyword>
<keyword id="KW-0678">Repressor</keyword>
<keyword id="KW-0804">Transcription</keyword>
<keyword id="KW-0805">Transcription regulation</keyword>
<keyword id="KW-0832">Ubl conjugation</keyword>
<keyword id="KW-0853">WD repeat</keyword>